<protein>
    <recommendedName>
        <fullName evidence="1">UvrABC system protein C</fullName>
        <shortName evidence="1">Protein UvrC</shortName>
    </recommendedName>
    <alternativeName>
        <fullName evidence="1">Excinuclease ABC subunit C</fullName>
    </alternativeName>
</protein>
<gene>
    <name evidence="1" type="primary">uvrC</name>
    <name type="ordered locus">PsycPRwf_0205</name>
</gene>
<dbReference type="EMBL" id="CP000713">
    <property type="protein sequence ID" value="ABQ93164.1"/>
    <property type="molecule type" value="Genomic_DNA"/>
</dbReference>
<dbReference type="SMR" id="A5WBX3"/>
<dbReference type="STRING" id="349106.PsycPRwf_0205"/>
<dbReference type="KEGG" id="prw:PsycPRwf_0205"/>
<dbReference type="eggNOG" id="COG0322">
    <property type="taxonomic scope" value="Bacteria"/>
</dbReference>
<dbReference type="HOGENOM" id="CLU_014841_3_0_6"/>
<dbReference type="GO" id="GO:0005737">
    <property type="term" value="C:cytoplasm"/>
    <property type="evidence" value="ECO:0007669"/>
    <property type="project" value="UniProtKB-SubCell"/>
</dbReference>
<dbReference type="GO" id="GO:0009380">
    <property type="term" value="C:excinuclease repair complex"/>
    <property type="evidence" value="ECO:0007669"/>
    <property type="project" value="InterPro"/>
</dbReference>
<dbReference type="GO" id="GO:0003677">
    <property type="term" value="F:DNA binding"/>
    <property type="evidence" value="ECO:0007669"/>
    <property type="project" value="UniProtKB-UniRule"/>
</dbReference>
<dbReference type="GO" id="GO:0009381">
    <property type="term" value="F:excinuclease ABC activity"/>
    <property type="evidence" value="ECO:0007669"/>
    <property type="project" value="UniProtKB-UniRule"/>
</dbReference>
<dbReference type="GO" id="GO:0006289">
    <property type="term" value="P:nucleotide-excision repair"/>
    <property type="evidence" value="ECO:0007669"/>
    <property type="project" value="UniProtKB-UniRule"/>
</dbReference>
<dbReference type="GO" id="GO:0009432">
    <property type="term" value="P:SOS response"/>
    <property type="evidence" value="ECO:0007669"/>
    <property type="project" value="UniProtKB-UniRule"/>
</dbReference>
<dbReference type="CDD" id="cd10434">
    <property type="entry name" value="GIY-YIG_UvrC_Cho"/>
    <property type="match status" value="1"/>
</dbReference>
<dbReference type="FunFam" id="3.30.420.340:FF:000001">
    <property type="entry name" value="UvrABC system protein C"/>
    <property type="match status" value="1"/>
</dbReference>
<dbReference type="FunFam" id="3.40.1440.10:FF:000001">
    <property type="entry name" value="UvrABC system protein C"/>
    <property type="match status" value="1"/>
</dbReference>
<dbReference type="Gene3D" id="1.10.150.20">
    <property type="entry name" value="5' to 3' exonuclease, C-terminal subdomain"/>
    <property type="match status" value="1"/>
</dbReference>
<dbReference type="Gene3D" id="3.40.1440.10">
    <property type="entry name" value="GIY-YIG endonuclease"/>
    <property type="match status" value="1"/>
</dbReference>
<dbReference type="Gene3D" id="4.10.860.10">
    <property type="entry name" value="UVR domain"/>
    <property type="match status" value="1"/>
</dbReference>
<dbReference type="Gene3D" id="3.30.420.340">
    <property type="entry name" value="UvrC, RNAse H endonuclease domain"/>
    <property type="match status" value="1"/>
</dbReference>
<dbReference type="HAMAP" id="MF_00203">
    <property type="entry name" value="UvrC"/>
    <property type="match status" value="1"/>
</dbReference>
<dbReference type="InterPro" id="IPR041663">
    <property type="entry name" value="DisA/LigA_HHH"/>
</dbReference>
<dbReference type="InterPro" id="IPR000305">
    <property type="entry name" value="GIY-YIG_endonuc"/>
</dbReference>
<dbReference type="InterPro" id="IPR035901">
    <property type="entry name" value="GIY-YIG_endonuc_sf"/>
</dbReference>
<dbReference type="InterPro" id="IPR047296">
    <property type="entry name" value="GIY-YIG_UvrC_Cho"/>
</dbReference>
<dbReference type="InterPro" id="IPR003583">
    <property type="entry name" value="Hlx-hairpin-Hlx_DNA-bd_motif"/>
</dbReference>
<dbReference type="InterPro" id="IPR010994">
    <property type="entry name" value="RuvA_2-like"/>
</dbReference>
<dbReference type="InterPro" id="IPR001943">
    <property type="entry name" value="UVR_dom"/>
</dbReference>
<dbReference type="InterPro" id="IPR036876">
    <property type="entry name" value="UVR_dom_sf"/>
</dbReference>
<dbReference type="InterPro" id="IPR050066">
    <property type="entry name" value="UvrABC_protein_C"/>
</dbReference>
<dbReference type="InterPro" id="IPR004791">
    <property type="entry name" value="UvrC"/>
</dbReference>
<dbReference type="InterPro" id="IPR001162">
    <property type="entry name" value="UvrC_RNase_H_dom"/>
</dbReference>
<dbReference type="InterPro" id="IPR038476">
    <property type="entry name" value="UvrC_RNase_H_dom_sf"/>
</dbReference>
<dbReference type="NCBIfam" id="TIGR00194">
    <property type="entry name" value="uvrC"/>
    <property type="match status" value="1"/>
</dbReference>
<dbReference type="PANTHER" id="PTHR30562:SF1">
    <property type="entry name" value="UVRABC SYSTEM PROTEIN C"/>
    <property type="match status" value="1"/>
</dbReference>
<dbReference type="PANTHER" id="PTHR30562">
    <property type="entry name" value="UVRC/OXIDOREDUCTASE"/>
    <property type="match status" value="1"/>
</dbReference>
<dbReference type="Pfam" id="PF01541">
    <property type="entry name" value="GIY-YIG"/>
    <property type="match status" value="1"/>
</dbReference>
<dbReference type="Pfam" id="PF12826">
    <property type="entry name" value="HHH_2"/>
    <property type="match status" value="1"/>
</dbReference>
<dbReference type="Pfam" id="PF02151">
    <property type="entry name" value="UVR"/>
    <property type="match status" value="1"/>
</dbReference>
<dbReference type="Pfam" id="PF22920">
    <property type="entry name" value="UvrC_RNaseH"/>
    <property type="match status" value="1"/>
</dbReference>
<dbReference type="Pfam" id="PF08459">
    <property type="entry name" value="UvrC_RNaseH_dom"/>
    <property type="match status" value="1"/>
</dbReference>
<dbReference type="SMART" id="SM00465">
    <property type="entry name" value="GIYc"/>
    <property type="match status" value="1"/>
</dbReference>
<dbReference type="SMART" id="SM00278">
    <property type="entry name" value="HhH1"/>
    <property type="match status" value="2"/>
</dbReference>
<dbReference type="SUPFAM" id="SSF46600">
    <property type="entry name" value="C-terminal UvrC-binding domain of UvrB"/>
    <property type="match status" value="1"/>
</dbReference>
<dbReference type="SUPFAM" id="SSF82771">
    <property type="entry name" value="GIY-YIG endonuclease"/>
    <property type="match status" value="1"/>
</dbReference>
<dbReference type="SUPFAM" id="SSF47781">
    <property type="entry name" value="RuvA domain 2-like"/>
    <property type="match status" value="1"/>
</dbReference>
<dbReference type="PROSITE" id="PS50164">
    <property type="entry name" value="GIY_YIG"/>
    <property type="match status" value="1"/>
</dbReference>
<dbReference type="PROSITE" id="PS50151">
    <property type="entry name" value="UVR"/>
    <property type="match status" value="1"/>
</dbReference>
<dbReference type="PROSITE" id="PS50165">
    <property type="entry name" value="UVRC"/>
    <property type="match status" value="1"/>
</dbReference>
<name>UVRC_PSYWF</name>
<proteinExistence type="inferred from homology"/>
<comment type="function">
    <text evidence="1">The UvrABC repair system catalyzes the recognition and processing of DNA lesions. UvrC both incises the 5' and 3' sides of the lesion. The N-terminal half is responsible for the 3' incision and the C-terminal half is responsible for the 5' incision.</text>
</comment>
<comment type="subunit">
    <text evidence="1">Interacts with UvrB in an incision complex.</text>
</comment>
<comment type="subcellular location">
    <subcellularLocation>
        <location evidence="1">Cytoplasm</location>
    </subcellularLocation>
</comment>
<comment type="similarity">
    <text evidence="1">Belongs to the UvrC family.</text>
</comment>
<organism>
    <name type="scientific">Psychrobacter sp. (strain PRwf-1)</name>
    <dbReference type="NCBI Taxonomy" id="349106"/>
    <lineage>
        <taxon>Bacteria</taxon>
        <taxon>Pseudomonadati</taxon>
        <taxon>Pseudomonadota</taxon>
        <taxon>Gammaproteobacteria</taxon>
        <taxon>Moraxellales</taxon>
        <taxon>Moraxellaceae</taxon>
        <taxon>Psychrobacter</taxon>
    </lineage>
</organism>
<evidence type="ECO:0000255" key="1">
    <source>
        <dbReference type="HAMAP-Rule" id="MF_00203"/>
    </source>
</evidence>
<keyword id="KW-0963">Cytoplasm</keyword>
<keyword id="KW-0227">DNA damage</keyword>
<keyword id="KW-0228">DNA excision</keyword>
<keyword id="KW-0234">DNA repair</keyword>
<keyword id="KW-0267">Excision nuclease</keyword>
<keyword id="KW-0742">SOS response</keyword>
<sequence length="614" mass="69098">MVTPSLTAQADDKQARLKHLIKRLPNLPGVYKMLGKNGDILYVGKAKSLKSRVNSYFAKTIDHPKTRALVSRIHDIETIITRSETEALLLEQNLIKEHRPPYNVLLRDDKSYLYVFISADQPYPRLAYGRGKAKHQKGKFFGPFPSAHAAKETLVLMQKMFQMRQCTNTFFRQRKRPCLEYQIKRCRAPCVGLVSAEEYAADVQNTIRFLKGDSSDIHTTLIEKMEHSAEALDFEKAAFYRDQLSMLREVQSRQAVYTVQGEADIISIASQAGMTCVNVLTVRGGRVLGGKNYFPDVDSNEPINDNLSAFITSFYFQVTDDLPAEIIISHELPDQMALQEALSTYFEAKTVIKTNVREHRAEWLDLAKLNAHNALKTKLGDYLELHARFAALKEVLEPVSQSSIDTIECFDISHTMGEATIASCVVFDQGGARKRDYRQYAIHGVQDGDDYAAMAQAITRRYKKHPLPDVLLIDGGKGQLSMAKNVLTELGLLNDTLLIGVAKGEGRKAGLEVLHFIEHEPLDLPMDSKALHLIMNIRDEAHRFAITAHRKKRDKRRSSSVLEAIPGLGEKRRRDLLNHFGGLQQLLGASQQELEGVNGIGKVMANTIYKVLHE</sequence>
<accession>A5WBX3</accession>
<feature type="chain" id="PRO_1000077823" description="UvrABC system protein C">
    <location>
        <begin position="1"/>
        <end position="614"/>
    </location>
</feature>
<feature type="domain" description="GIY-YIG" evidence="1">
    <location>
        <begin position="26"/>
        <end position="104"/>
    </location>
</feature>
<feature type="domain" description="UVR" evidence="1">
    <location>
        <begin position="215"/>
        <end position="250"/>
    </location>
</feature>
<reference key="1">
    <citation type="submission" date="2007-05" db="EMBL/GenBank/DDBJ databases">
        <title>Complete sequence of chromosome of Psychrobacter sp. PRwf-1.</title>
        <authorList>
            <consortium name="US DOE Joint Genome Institute"/>
            <person name="Copeland A."/>
            <person name="Lucas S."/>
            <person name="Lapidus A."/>
            <person name="Barry K."/>
            <person name="Detter J.C."/>
            <person name="Glavina del Rio T."/>
            <person name="Hammon N."/>
            <person name="Israni S."/>
            <person name="Dalin E."/>
            <person name="Tice H."/>
            <person name="Pitluck S."/>
            <person name="Chain P."/>
            <person name="Malfatti S."/>
            <person name="Shin M."/>
            <person name="Vergez L."/>
            <person name="Schmutz J."/>
            <person name="Larimer F."/>
            <person name="Land M."/>
            <person name="Hauser L."/>
            <person name="Kyrpides N."/>
            <person name="Kim E."/>
            <person name="Tiedje J."/>
            <person name="Richardson P."/>
        </authorList>
    </citation>
    <scope>NUCLEOTIDE SEQUENCE [LARGE SCALE GENOMIC DNA]</scope>
    <source>
        <strain>PRwf-1</strain>
    </source>
</reference>